<comment type="function">
    <text evidence="1">Ligates lysine onto the cytidine present at position 34 of the AUA codon-specific tRNA(Ile) that contains the anticodon CAU, in an ATP-dependent manner. Cytidine is converted to lysidine, thus changing the amino acid specificity of the tRNA from methionine to isoleucine.</text>
</comment>
<comment type="catalytic activity">
    <reaction evidence="1">
        <text>cytidine(34) in tRNA(Ile2) + L-lysine + ATP = lysidine(34) in tRNA(Ile2) + AMP + diphosphate + H(+)</text>
        <dbReference type="Rhea" id="RHEA:43744"/>
        <dbReference type="Rhea" id="RHEA-COMP:10625"/>
        <dbReference type="Rhea" id="RHEA-COMP:10670"/>
        <dbReference type="ChEBI" id="CHEBI:15378"/>
        <dbReference type="ChEBI" id="CHEBI:30616"/>
        <dbReference type="ChEBI" id="CHEBI:32551"/>
        <dbReference type="ChEBI" id="CHEBI:33019"/>
        <dbReference type="ChEBI" id="CHEBI:82748"/>
        <dbReference type="ChEBI" id="CHEBI:83665"/>
        <dbReference type="ChEBI" id="CHEBI:456215"/>
        <dbReference type="EC" id="6.3.4.19"/>
    </reaction>
</comment>
<comment type="subcellular location">
    <subcellularLocation>
        <location evidence="1">Cytoplasm</location>
    </subcellularLocation>
</comment>
<comment type="domain">
    <text>The N-terminal region contains the highly conserved SGGXDS motif, predicted to be a P-loop motif involved in ATP binding.</text>
</comment>
<comment type="similarity">
    <text evidence="1">Belongs to the tRNA(Ile)-lysidine synthase family.</text>
</comment>
<keyword id="KW-0067">ATP-binding</keyword>
<keyword id="KW-0963">Cytoplasm</keyword>
<keyword id="KW-0436">Ligase</keyword>
<keyword id="KW-0547">Nucleotide-binding</keyword>
<keyword id="KW-0819">tRNA processing</keyword>
<protein>
    <recommendedName>
        <fullName evidence="1">tRNA(Ile)-lysidine synthase</fullName>
        <ecNumber evidence="1">6.3.4.19</ecNumber>
    </recommendedName>
    <alternativeName>
        <fullName evidence="1">tRNA(Ile)-2-lysyl-cytidine synthase</fullName>
    </alternativeName>
    <alternativeName>
        <fullName evidence="1">tRNA(Ile)-lysidine synthetase</fullName>
    </alternativeName>
</protein>
<accession>Q3KH95</accession>
<evidence type="ECO:0000255" key="1">
    <source>
        <dbReference type="HAMAP-Rule" id="MF_01161"/>
    </source>
</evidence>
<dbReference type="EC" id="6.3.4.19" evidence="1"/>
<dbReference type="EMBL" id="CP000094">
    <property type="protein sequence ID" value="ABA72861.1"/>
    <property type="molecule type" value="Genomic_DNA"/>
</dbReference>
<dbReference type="RefSeq" id="WP_011332695.1">
    <property type="nucleotide sequence ID" value="NC_007492.2"/>
</dbReference>
<dbReference type="SMR" id="Q3KH95"/>
<dbReference type="KEGG" id="pfo:Pfl01_1118"/>
<dbReference type="eggNOG" id="COG0037">
    <property type="taxonomic scope" value="Bacteria"/>
</dbReference>
<dbReference type="HOGENOM" id="CLU_018869_2_0_6"/>
<dbReference type="Proteomes" id="UP000002704">
    <property type="component" value="Chromosome"/>
</dbReference>
<dbReference type="GO" id="GO:0005737">
    <property type="term" value="C:cytoplasm"/>
    <property type="evidence" value="ECO:0007669"/>
    <property type="project" value="UniProtKB-SubCell"/>
</dbReference>
<dbReference type="GO" id="GO:0005524">
    <property type="term" value="F:ATP binding"/>
    <property type="evidence" value="ECO:0007669"/>
    <property type="project" value="UniProtKB-UniRule"/>
</dbReference>
<dbReference type="GO" id="GO:0032267">
    <property type="term" value="F:tRNA(Ile)-lysidine synthase activity"/>
    <property type="evidence" value="ECO:0007669"/>
    <property type="project" value="UniProtKB-EC"/>
</dbReference>
<dbReference type="GO" id="GO:0006400">
    <property type="term" value="P:tRNA modification"/>
    <property type="evidence" value="ECO:0007669"/>
    <property type="project" value="UniProtKB-UniRule"/>
</dbReference>
<dbReference type="CDD" id="cd01992">
    <property type="entry name" value="TilS_N"/>
    <property type="match status" value="1"/>
</dbReference>
<dbReference type="Gene3D" id="1.20.59.20">
    <property type="match status" value="1"/>
</dbReference>
<dbReference type="Gene3D" id="3.40.50.620">
    <property type="entry name" value="HUPs"/>
    <property type="match status" value="1"/>
</dbReference>
<dbReference type="HAMAP" id="MF_01161">
    <property type="entry name" value="tRNA_Ile_lys_synt"/>
    <property type="match status" value="1"/>
</dbReference>
<dbReference type="InterPro" id="IPR012796">
    <property type="entry name" value="Lysidine-tRNA-synth_C"/>
</dbReference>
<dbReference type="InterPro" id="IPR014729">
    <property type="entry name" value="Rossmann-like_a/b/a_fold"/>
</dbReference>
<dbReference type="InterPro" id="IPR011063">
    <property type="entry name" value="TilS/TtcA_N"/>
</dbReference>
<dbReference type="InterPro" id="IPR012094">
    <property type="entry name" value="tRNA_Ile_lys_synt"/>
</dbReference>
<dbReference type="InterPro" id="IPR012795">
    <property type="entry name" value="tRNA_Ile_lys_synt_N"/>
</dbReference>
<dbReference type="InterPro" id="IPR015262">
    <property type="entry name" value="tRNA_Ile_lys_synt_subst-bd"/>
</dbReference>
<dbReference type="NCBIfam" id="TIGR02433">
    <property type="entry name" value="lysidine_TilS_C"/>
    <property type="match status" value="1"/>
</dbReference>
<dbReference type="NCBIfam" id="TIGR02432">
    <property type="entry name" value="lysidine_TilS_N"/>
    <property type="match status" value="1"/>
</dbReference>
<dbReference type="PANTHER" id="PTHR43033">
    <property type="entry name" value="TRNA(ILE)-LYSIDINE SYNTHASE-RELATED"/>
    <property type="match status" value="1"/>
</dbReference>
<dbReference type="PANTHER" id="PTHR43033:SF1">
    <property type="entry name" value="TRNA(ILE)-LYSIDINE SYNTHASE-RELATED"/>
    <property type="match status" value="1"/>
</dbReference>
<dbReference type="Pfam" id="PF01171">
    <property type="entry name" value="ATP_bind_3"/>
    <property type="match status" value="1"/>
</dbReference>
<dbReference type="Pfam" id="PF09179">
    <property type="entry name" value="TilS"/>
    <property type="match status" value="1"/>
</dbReference>
<dbReference type="Pfam" id="PF11734">
    <property type="entry name" value="TilS_C"/>
    <property type="match status" value="1"/>
</dbReference>
<dbReference type="SMART" id="SM00977">
    <property type="entry name" value="TilS_C"/>
    <property type="match status" value="1"/>
</dbReference>
<dbReference type="SUPFAM" id="SSF52402">
    <property type="entry name" value="Adenine nucleotide alpha hydrolases-like"/>
    <property type="match status" value="1"/>
</dbReference>
<dbReference type="SUPFAM" id="SSF82829">
    <property type="entry name" value="MesJ substrate recognition domain-like"/>
    <property type="match status" value="1"/>
</dbReference>
<dbReference type="SUPFAM" id="SSF56037">
    <property type="entry name" value="PheT/TilS domain"/>
    <property type="match status" value="1"/>
</dbReference>
<name>TILS_PSEPF</name>
<sequence>MGQPSIDLPSRLLRNLKPWLGASHWRIAFSGGLDSTVLLHLLAKLAKNQSIPALSAIHVHHGLQAAADAWPAHCQAVCEELAVPLQVQRVQVQPGASVERAARDARYAAFSAATQANDVLLTGQHRDDQAETLLFRLLRGAGVRGLSGMPATRALGQGSLVRPLLDVTRAELEAYARDHGLRWIEDPSNQDRQFSRNYLRHQIMPLLIGRWPQAHASMARSAAHLREAQGLLDELAQIDLTQASLPSEFEWSGLPSLEFAAIAKLSDARQRNALSHWLEPLTRLPDTDHWSGWVDVRDAGNDASPIWRLADGELHRSAGRLWWLSGEWLRTPVVSGDWHDLSSALRLPDNGRVMFSGQTPVGPLHIRYRQGGEVMDLAGRGHRDLKRLLNERAVPGFVRGRLPLLFRGEELLAVANLPGLDGNALEGWRLHWQPSDEDQGLR</sequence>
<feature type="chain" id="PRO_1000213716" description="tRNA(Ile)-lysidine synthase">
    <location>
        <begin position="1"/>
        <end position="442"/>
    </location>
</feature>
<feature type="binding site" evidence="1">
    <location>
        <begin position="30"/>
        <end position="35"/>
    </location>
    <ligand>
        <name>ATP</name>
        <dbReference type="ChEBI" id="CHEBI:30616"/>
    </ligand>
</feature>
<reference key="1">
    <citation type="journal article" date="2009" name="Genome Biol.">
        <title>Genomic and genetic analyses of diversity and plant interactions of Pseudomonas fluorescens.</title>
        <authorList>
            <person name="Silby M.W."/>
            <person name="Cerdeno-Tarraga A.M."/>
            <person name="Vernikos G.S."/>
            <person name="Giddens S.R."/>
            <person name="Jackson R.W."/>
            <person name="Preston G.M."/>
            <person name="Zhang X.-X."/>
            <person name="Moon C.D."/>
            <person name="Gehrig S.M."/>
            <person name="Godfrey S.A.C."/>
            <person name="Knight C.G."/>
            <person name="Malone J.G."/>
            <person name="Robinson Z."/>
            <person name="Spiers A.J."/>
            <person name="Harris S."/>
            <person name="Challis G.L."/>
            <person name="Yaxley A.M."/>
            <person name="Harris D."/>
            <person name="Seeger K."/>
            <person name="Murphy L."/>
            <person name="Rutter S."/>
            <person name="Squares R."/>
            <person name="Quail M.A."/>
            <person name="Saunders E."/>
            <person name="Mavromatis K."/>
            <person name="Brettin T.S."/>
            <person name="Bentley S.D."/>
            <person name="Hothersall J."/>
            <person name="Stephens E."/>
            <person name="Thomas C.M."/>
            <person name="Parkhill J."/>
            <person name="Levy S.B."/>
            <person name="Rainey P.B."/>
            <person name="Thomson N.R."/>
        </authorList>
    </citation>
    <scope>NUCLEOTIDE SEQUENCE [LARGE SCALE GENOMIC DNA]</scope>
    <source>
        <strain>Pf0-1</strain>
    </source>
</reference>
<organism>
    <name type="scientific">Pseudomonas fluorescens (strain Pf0-1)</name>
    <dbReference type="NCBI Taxonomy" id="205922"/>
    <lineage>
        <taxon>Bacteria</taxon>
        <taxon>Pseudomonadati</taxon>
        <taxon>Pseudomonadota</taxon>
        <taxon>Gammaproteobacteria</taxon>
        <taxon>Pseudomonadales</taxon>
        <taxon>Pseudomonadaceae</taxon>
        <taxon>Pseudomonas</taxon>
    </lineage>
</organism>
<proteinExistence type="inferred from homology"/>
<gene>
    <name evidence="1" type="primary">tilS</name>
    <name type="ordered locus">Pfl01_1118</name>
</gene>